<reference key="1">
    <citation type="journal article" date="2006" name="BMC Genomics">
        <title>The genome of the square archaeon Haloquadratum walsbyi: life at the limits of water activity.</title>
        <authorList>
            <person name="Bolhuis H."/>
            <person name="Palm P."/>
            <person name="Wende A."/>
            <person name="Falb M."/>
            <person name="Rampp M."/>
            <person name="Rodriguez-Valera F."/>
            <person name="Pfeiffer F."/>
            <person name="Oesterhelt D."/>
        </authorList>
    </citation>
    <scope>NUCLEOTIDE SEQUENCE [LARGE SCALE GENOMIC DNA]</scope>
    <source>
        <strain>DSM 16790 / HBSQ001</strain>
    </source>
</reference>
<protein>
    <recommendedName>
        <fullName evidence="1">D-aminoacyl-tRNA deacylase</fullName>
        <ecNumber evidence="1">3.1.1.96</ecNumber>
    </recommendedName>
    <alternativeName>
        <fullName>D-tyrosyl-tRNA(Tyr) deacylase</fullName>
    </alternativeName>
</protein>
<sequence length="521" mass="56102">MIGLVVSSADTASVTISDQLHELVEWESHRDAAGDEYEQYDDFEMRTIDEWHLEAENASELFSTTPQIIAFLSRHSGDTGPLLTTHFTGNFGPAEYGGEPGSFAQACPMIQQTLLEAFDRYAPSKYDVGIECTHHGPTTVGAPSLFVELGSSKAEWNDPDGAHAVAQAILELSGEDAPANVETDRTVVGFGGGHYAPRFERIIRETDWVVGHIGADWALDSMGAPAANRDIINHAVTASDADVALVADDRPELTKVISQADIRVVQERWLRETTGVSRPMVSALENALVPIASGLRLGTPATEYDPATSDEFVITDRHTDNDAVGTVHTKDSTDIDTGTNHNVDAERTESEDSHNIRDAIDRADADAVVLAFPTSLMETISGIDIETTNQVFSEHTLAFETTEGGTRPTGRMIVSDYLSVESITHALIDILKLKYDRVERTDETLRVRRQVFDPAKAATLDVPEGPAFGRLAAGESVTVAGRTIDPEAVHTTETVTFPVFSTSSSSSSSSSSSSSSSSSSS</sequence>
<gene>
    <name evidence="1" type="primary">dtdA</name>
    <name type="ordered locus">HQ_1244A</name>
</gene>
<proteinExistence type="inferred from homology"/>
<name>DTDA_HALWD</name>
<dbReference type="EC" id="3.1.1.96" evidence="1"/>
<dbReference type="EMBL" id="AM180088">
    <property type="protein sequence ID" value="CAJ51373.2"/>
    <property type="molecule type" value="Genomic_DNA"/>
</dbReference>
<dbReference type="SMR" id="Q18KS1"/>
<dbReference type="STRING" id="362976.HQ_1244A"/>
<dbReference type="KEGG" id="hwa:HQ_1244A"/>
<dbReference type="eggNOG" id="arCOG01616">
    <property type="taxonomic scope" value="Archaea"/>
</dbReference>
<dbReference type="HOGENOM" id="CLU_610619_0_0_2"/>
<dbReference type="Proteomes" id="UP000001975">
    <property type="component" value="Chromosome"/>
</dbReference>
<dbReference type="GO" id="GO:0051499">
    <property type="term" value="F:D-aminoacyl-tRNA deacylase activity"/>
    <property type="evidence" value="ECO:0007669"/>
    <property type="project" value="UniProtKB-UniRule"/>
</dbReference>
<dbReference type="GO" id="GO:0008270">
    <property type="term" value="F:zinc ion binding"/>
    <property type="evidence" value="ECO:0007669"/>
    <property type="project" value="UniProtKB-UniRule"/>
</dbReference>
<dbReference type="GO" id="GO:0019478">
    <property type="term" value="P:D-amino acid catabolic process"/>
    <property type="evidence" value="ECO:0007669"/>
    <property type="project" value="UniProtKB-UniRule"/>
</dbReference>
<dbReference type="Gene3D" id="3.40.50.10700">
    <property type="entry name" value="AF0625-like"/>
    <property type="match status" value="1"/>
</dbReference>
<dbReference type="Gene3D" id="3.40.630.50">
    <property type="entry name" value="AF0625-like"/>
    <property type="match status" value="1"/>
</dbReference>
<dbReference type="HAMAP" id="MF_00562">
    <property type="entry name" value="Deacylase_DtdA"/>
    <property type="match status" value="1"/>
</dbReference>
<dbReference type="InterPro" id="IPR018033">
    <property type="entry name" value="Deacylase_DtdA_archaea"/>
</dbReference>
<dbReference type="InterPro" id="IPR007508">
    <property type="entry name" value="DtdA"/>
</dbReference>
<dbReference type="NCBIfam" id="NF011437">
    <property type="entry name" value="PRK14866.1-5"/>
    <property type="match status" value="1"/>
</dbReference>
<dbReference type="PANTHER" id="PTHR34667">
    <property type="entry name" value="D-AMINOACYL-TRNA DEACYLASE"/>
    <property type="match status" value="1"/>
</dbReference>
<dbReference type="PANTHER" id="PTHR34667:SF1">
    <property type="entry name" value="D-AMINOACYL-TRNA DEACYLASE"/>
    <property type="match status" value="1"/>
</dbReference>
<dbReference type="Pfam" id="PF04414">
    <property type="entry name" value="tRNA_deacylase"/>
    <property type="match status" value="1"/>
</dbReference>
<dbReference type="SUPFAM" id="SSF142535">
    <property type="entry name" value="AF0625-like"/>
    <property type="match status" value="1"/>
</dbReference>
<keyword id="KW-0378">Hydrolase</keyword>
<keyword id="KW-0479">Metal-binding</keyword>
<keyword id="KW-1185">Reference proteome</keyword>
<keyword id="KW-0862">Zinc</keyword>
<organism>
    <name type="scientific">Haloquadratum walsbyi (strain DSM 16790 / HBSQ001)</name>
    <dbReference type="NCBI Taxonomy" id="362976"/>
    <lineage>
        <taxon>Archaea</taxon>
        <taxon>Methanobacteriati</taxon>
        <taxon>Methanobacteriota</taxon>
        <taxon>Stenosarchaea group</taxon>
        <taxon>Halobacteria</taxon>
        <taxon>Halobacteriales</taxon>
        <taxon>Haloferacaceae</taxon>
        <taxon>Haloquadratum</taxon>
    </lineage>
</organism>
<feature type="chain" id="PRO_0000345210" description="D-aminoacyl-tRNA deacylase">
    <location>
        <begin position="1"/>
        <end position="521"/>
    </location>
</feature>
<feature type="region of interest" description="Disordered" evidence="2">
    <location>
        <begin position="323"/>
        <end position="353"/>
    </location>
</feature>
<feature type="region of interest" description="Disordered" evidence="2">
    <location>
        <begin position="499"/>
        <end position="521"/>
    </location>
</feature>
<feature type="compositionally biased region" description="Basic and acidic residues" evidence="2">
    <location>
        <begin position="343"/>
        <end position="353"/>
    </location>
</feature>
<feature type="compositionally biased region" description="Low complexity" evidence="2">
    <location>
        <begin position="501"/>
        <end position="521"/>
    </location>
</feature>
<comment type="function">
    <text evidence="1">D-aminoacyl-tRNA deacylase with broad substrate specificity. By recycling D-aminoacyl-tRNA to D-amino acids and free tRNA molecules, this enzyme counteracts the toxicity associated with the formation of D-aminoacyl-tRNA entities in vivo.</text>
</comment>
<comment type="catalytic activity">
    <reaction evidence="1">
        <text>a D-aminoacyl-tRNA + H2O = a tRNA + a D-alpha-amino acid + H(+)</text>
        <dbReference type="Rhea" id="RHEA:13953"/>
        <dbReference type="Rhea" id="RHEA-COMP:10123"/>
        <dbReference type="Rhea" id="RHEA-COMP:10124"/>
        <dbReference type="ChEBI" id="CHEBI:15377"/>
        <dbReference type="ChEBI" id="CHEBI:15378"/>
        <dbReference type="ChEBI" id="CHEBI:59871"/>
        <dbReference type="ChEBI" id="CHEBI:78442"/>
        <dbReference type="ChEBI" id="CHEBI:79333"/>
        <dbReference type="EC" id="3.1.1.96"/>
    </reaction>
</comment>
<comment type="catalytic activity">
    <reaction evidence="1">
        <text>glycyl-tRNA(Ala) + H2O = tRNA(Ala) + glycine + H(+)</text>
        <dbReference type="Rhea" id="RHEA:53744"/>
        <dbReference type="Rhea" id="RHEA-COMP:9657"/>
        <dbReference type="Rhea" id="RHEA-COMP:13640"/>
        <dbReference type="ChEBI" id="CHEBI:15377"/>
        <dbReference type="ChEBI" id="CHEBI:15378"/>
        <dbReference type="ChEBI" id="CHEBI:57305"/>
        <dbReference type="ChEBI" id="CHEBI:78442"/>
        <dbReference type="ChEBI" id="CHEBI:78522"/>
        <dbReference type="EC" id="3.1.1.96"/>
    </reaction>
</comment>
<comment type="cofactor">
    <cofactor evidence="1">
        <name>Zn(2+)</name>
        <dbReference type="ChEBI" id="CHEBI:29105"/>
    </cofactor>
    <text evidence="1">Binds 2 Zn(2+) ions per subunit.</text>
</comment>
<comment type="subunit">
    <text evidence="1">Monomer.</text>
</comment>
<comment type="similarity">
    <text evidence="1">Belongs to the DtdA deacylase family.</text>
</comment>
<accession>Q18KS1</accession>
<evidence type="ECO:0000255" key="1">
    <source>
        <dbReference type="HAMAP-Rule" id="MF_00562"/>
    </source>
</evidence>
<evidence type="ECO:0000256" key="2">
    <source>
        <dbReference type="SAM" id="MobiDB-lite"/>
    </source>
</evidence>